<reference key="1">
    <citation type="journal article" date="1999" name="Mol. Cell. Biol.">
        <title>Cloning, characterization, and expression of a novel Zn2+-binding FYVE finger-containing phosphoinositide kinase in insulin-sensitive cells.</title>
        <authorList>
            <person name="Shisheva A."/>
            <person name="Sbrissa D."/>
            <person name="Ikonomov O."/>
        </authorList>
    </citation>
    <scope>NUCLEOTIDE SEQUENCE [MRNA] (ISOFORMS 1 AND 2)</scope>
    <scope>CHARACTERIZATION</scope>
    <source>
        <tissue>Adipose tissue</tissue>
    </source>
</reference>
<reference key="2">
    <citation type="journal article" date="2004" name="DNA Res.">
        <title>Prediction of the coding sequences of mouse homologues of KIAA gene: IV. The complete nucleotide sequences of 500 mouse KIAA-homologous cDNAs identified by screening of terminal sequences of cDNA clones randomly sampled from size-fractionated libraries.</title>
        <authorList>
            <person name="Okazaki N."/>
            <person name="Kikuno R."/>
            <person name="Ohara R."/>
            <person name="Inamoto S."/>
            <person name="Koseki H."/>
            <person name="Hiraoka S."/>
            <person name="Saga Y."/>
            <person name="Seino S."/>
            <person name="Nishimura M."/>
            <person name="Kaisho T."/>
            <person name="Hoshino K."/>
            <person name="Kitamura H."/>
            <person name="Nagase T."/>
            <person name="Ohara O."/>
            <person name="Koga H."/>
        </authorList>
    </citation>
    <scope>NUCLEOTIDE SEQUENCE [LARGE SCALE MRNA] (ISOFORM 1)</scope>
    <source>
        <tissue>Pancreatic islet</tissue>
    </source>
</reference>
<reference key="3">
    <citation type="journal article" date="2005" name="Science">
        <title>The transcriptional landscape of the mammalian genome.</title>
        <authorList>
            <person name="Carninci P."/>
            <person name="Kasukawa T."/>
            <person name="Katayama S."/>
            <person name="Gough J."/>
            <person name="Frith M.C."/>
            <person name="Maeda N."/>
            <person name="Oyama R."/>
            <person name="Ravasi T."/>
            <person name="Lenhard B."/>
            <person name="Wells C."/>
            <person name="Kodzius R."/>
            <person name="Shimokawa K."/>
            <person name="Bajic V.B."/>
            <person name="Brenner S.E."/>
            <person name="Batalov S."/>
            <person name="Forrest A.R."/>
            <person name="Zavolan M."/>
            <person name="Davis M.J."/>
            <person name="Wilming L.G."/>
            <person name="Aidinis V."/>
            <person name="Allen J.E."/>
            <person name="Ambesi-Impiombato A."/>
            <person name="Apweiler R."/>
            <person name="Aturaliya R.N."/>
            <person name="Bailey T.L."/>
            <person name="Bansal M."/>
            <person name="Baxter L."/>
            <person name="Beisel K.W."/>
            <person name="Bersano T."/>
            <person name="Bono H."/>
            <person name="Chalk A.M."/>
            <person name="Chiu K.P."/>
            <person name="Choudhary V."/>
            <person name="Christoffels A."/>
            <person name="Clutterbuck D.R."/>
            <person name="Crowe M.L."/>
            <person name="Dalla E."/>
            <person name="Dalrymple B.P."/>
            <person name="de Bono B."/>
            <person name="Della Gatta G."/>
            <person name="di Bernardo D."/>
            <person name="Down T."/>
            <person name="Engstrom P."/>
            <person name="Fagiolini M."/>
            <person name="Faulkner G."/>
            <person name="Fletcher C.F."/>
            <person name="Fukushima T."/>
            <person name="Furuno M."/>
            <person name="Futaki S."/>
            <person name="Gariboldi M."/>
            <person name="Georgii-Hemming P."/>
            <person name="Gingeras T.R."/>
            <person name="Gojobori T."/>
            <person name="Green R.E."/>
            <person name="Gustincich S."/>
            <person name="Harbers M."/>
            <person name="Hayashi Y."/>
            <person name="Hensch T.K."/>
            <person name="Hirokawa N."/>
            <person name="Hill D."/>
            <person name="Huminiecki L."/>
            <person name="Iacono M."/>
            <person name="Ikeo K."/>
            <person name="Iwama A."/>
            <person name="Ishikawa T."/>
            <person name="Jakt M."/>
            <person name="Kanapin A."/>
            <person name="Katoh M."/>
            <person name="Kawasawa Y."/>
            <person name="Kelso J."/>
            <person name="Kitamura H."/>
            <person name="Kitano H."/>
            <person name="Kollias G."/>
            <person name="Krishnan S.P."/>
            <person name="Kruger A."/>
            <person name="Kummerfeld S.K."/>
            <person name="Kurochkin I.V."/>
            <person name="Lareau L.F."/>
            <person name="Lazarevic D."/>
            <person name="Lipovich L."/>
            <person name="Liu J."/>
            <person name="Liuni S."/>
            <person name="McWilliam S."/>
            <person name="Madan Babu M."/>
            <person name="Madera M."/>
            <person name="Marchionni L."/>
            <person name="Matsuda H."/>
            <person name="Matsuzawa S."/>
            <person name="Miki H."/>
            <person name="Mignone F."/>
            <person name="Miyake S."/>
            <person name="Morris K."/>
            <person name="Mottagui-Tabar S."/>
            <person name="Mulder N."/>
            <person name="Nakano N."/>
            <person name="Nakauchi H."/>
            <person name="Ng P."/>
            <person name="Nilsson R."/>
            <person name="Nishiguchi S."/>
            <person name="Nishikawa S."/>
            <person name="Nori F."/>
            <person name="Ohara O."/>
            <person name="Okazaki Y."/>
            <person name="Orlando V."/>
            <person name="Pang K.C."/>
            <person name="Pavan W.J."/>
            <person name="Pavesi G."/>
            <person name="Pesole G."/>
            <person name="Petrovsky N."/>
            <person name="Piazza S."/>
            <person name="Reed J."/>
            <person name="Reid J.F."/>
            <person name="Ring B.Z."/>
            <person name="Ringwald M."/>
            <person name="Rost B."/>
            <person name="Ruan Y."/>
            <person name="Salzberg S.L."/>
            <person name="Sandelin A."/>
            <person name="Schneider C."/>
            <person name="Schoenbach C."/>
            <person name="Sekiguchi K."/>
            <person name="Semple C.A."/>
            <person name="Seno S."/>
            <person name="Sessa L."/>
            <person name="Sheng Y."/>
            <person name="Shibata Y."/>
            <person name="Shimada H."/>
            <person name="Shimada K."/>
            <person name="Silva D."/>
            <person name="Sinclair B."/>
            <person name="Sperling S."/>
            <person name="Stupka E."/>
            <person name="Sugiura K."/>
            <person name="Sultana R."/>
            <person name="Takenaka Y."/>
            <person name="Taki K."/>
            <person name="Tammoja K."/>
            <person name="Tan S.L."/>
            <person name="Tang S."/>
            <person name="Taylor M.S."/>
            <person name="Tegner J."/>
            <person name="Teichmann S.A."/>
            <person name="Ueda H.R."/>
            <person name="van Nimwegen E."/>
            <person name="Verardo R."/>
            <person name="Wei C.L."/>
            <person name="Yagi K."/>
            <person name="Yamanishi H."/>
            <person name="Zabarovsky E."/>
            <person name="Zhu S."/>
            <person name="Zimmer A."/>
            <person name="Hide W."/>
            <person name="Bult C."/>
            <person name="Grimmond S.M."/>
            <person name="Teasdale R.D."/>
            <person name="Liu E.T."/>
            <person name="Brusic V."/>
            <person name="Quackenbush J."/>
            <person name="Wahlestedt C."/>
            <person name="Mattick J.S."/>
            <person name="Hume D.A."/>
            <person name="Kai C."/>
            <person name="Sasaki D."/>
            <person name="Tomaru Y."/>
            <person name="Fukuda S."/>
            <person name="Kanamori-Katayama M."/>
            <person name="Suzuki M."/>
            <person name="Aoki J."/>
            <person name="Arakawa T."/>
            <person name="Iida J."/>
            <person name="Imamura K."/>
            <person name="Itoh M."/>
            <person name="Kato T."/>
            <person name="Kawaji H."/>
            <person name="Kawagashira N."/>
            <person name="Kawashima T."/>
            <person name="Kojima M."/>
            <person name="Kondo S."/>
            <person name="Konno H."/>
            <person name="Nakano K."/>
            <person name="Ninomiya N."/>
            <person name="Nishio T."/>
            <person name="Okada M."/>
            <person name="Plessy C."/>
            <person name="Shibata K."/>
            <person name="Shiraki T."/>
            <person name="Suzuki S."/>
            <person name="Tagami M."/>
            <person name="Waki K."/>
            <person name="Watahiki A."/>
            <person name="Okamura-Oho Y."/>
            <person name="Suzuki H."/>
            <person name="Kawai J."/>
            <person name="Hayashizaki Y."/>
        </authorList>
    </citation>
    <scope>NUCLEOTIDE SEQUENCE [LARGE SCALE MRNA] (ISOFORM 3)</scope>
    <source>
        <strain>C57BL/6J</strain>
        <tissue>Cerebellum</tissue>
        <tissue>Ovary</tissue>
        <tissue>Spleen</tissue>
        <tissue>Uterus</tissue>
    </source>
</reference>
<reference key="4">
    <citation type="journal article" date="2009" name="PLoS Biol.">
        <title>Lineage-specific biology revealed by a finished genome assembly of the mouse.</title>
        <authorList>
            <person name="Church D.M."/>
            <person name="Goodstadt L."/>
            <person name="Hillier L.W."/>
            <person name="Zody M.C."/>
            <person name="Goldstein S."/>
            <person name="She X."/>
            <person name="Bult C.J."/>
            <person name="Agarwala R."/>
            <person name="Cherry J.L."/>
            <person name="DiCuccio M."/>
            <person name="Hlavina W."/>
            <person name="Kapustin Y."/>
            <person name="Meric P."/>
            <person name="Maglott D."/>
            <person name="Birtle Z."/>
            <person name="Marques A.C."/>
            <person name="Graves T."/>
            <person name="Zhou S."/>
            <person name="Teague B."/>
            <person name="Potamousis K."/>
            <person name="Churas C."/>
            <person name="Place M."/>
            <person name="Herschleb J."/>
            <person name="Runnheim R."/>
            <person name="Forrest D."/>
            <person name="Amos-Landgraf J."/>
            <person name="Schwartz D.C."/>
            <person name="Cheng Z."/>
            <person name="Lindblad-Toh K."/>
            <person name="Eichler E.E."/>
            <person name="Ponting C.P."/>
        </authorList>
    </citation>
    <scope>NUCLEOTIDE SEQUENCE [LARGE SCALE GENOMIC DNA]</scope>
    <source>
        <strain>C57BL/6J</strain>
    </source>
</reference>
<reference key="5">
    <citation type="journal article" date="1999" name="J. Biol. Chem.">
        <title>Complementation analysis in PtdInsP kinase-deficient yeast mutants demonstrates that Schizosaccharomyces pombe and murine Fab1p homologues are phosphatidylinositol 3-phosphate 5-kinases.</title>
        <authorList>
            <person name="McEwen R.K."/>
            <person name="Dove S.K."/>
            <person name="Cooke F.T."/>
            <person name="Painter G.F."/>
            <person name="Holmes A.B."/>
            <person name="Shisheva A."/>
            <person name="Ohya Y."/>
            <person name="Parker P.J."/>
            <person name="Michell R.H."/>
        </authorList>
    </citation>
    <scope>CATALYTIC ACTIVITY</scope>
    <scope>FUNCTION</scope>
</reference>
<reference key="6">
    <citation type="journal article" date="1999" name="J. Biol. Chem.">
        <title>PIKfyve, a mammalian ortholog of yeast Fab1p lipid kinase, synthesizes 5-phosphoinositides. Effect of insulin.</title>
        <authorList>
            <person name="Sbrissa D."/>
            <person name="Ikonomov O.C."/>
            <person name="Shisheva A."/>
        </authorList>
    </citation>
    <scope>FUNCTION</scope>
    <scope>CATALYTIC ACTIVITY</scope>
</reference>
<reference key="7">
    <citation type="journal article" date="2000" name="Biochemistry">
        <title>PIKfyve lipid kinase is a protein kinase: downregulation of 5'-phosphoinositide product formation by autophosphorylation.</title>
        <authorList>
            <person name="Sbrissa D."/>
            <person name="Ikonomov O.C."/>
            <person name="Shisheva A."/>
        </authorList>
    </citation>
    <scope>CATALYTIC ACTIVITY</scope>
    <scope>FUNCTION</scope>
    <scope>MUTAGENESIS OF LYS-1831</scope>
    <scope>PHOSPHORYLATION</scope>
    <scope>COFACTOR</scope>
</reference>
<reference key="8">
    <citation type="journal article" date="2003" name="J. Biol. Chem.">
        <title>Active PIKfyve associates with and promotes the membrane attachment of the late endosome-to-trans-Golgi network transport factor Rab9 effector p40.</title>
        <authorList>
            <person name="Ikonomov O.C."/>
            <person name="Sbrissa D."/>
            <person name="Mlak K."/>
            <person name="Deeb R."/>
            <person name="Fligger J."/>
            <person name="Soans A."/>
            <person name="Finley R.L. Jr."/>
            <person name="Shisheva A."/>
        </authorList>
    </citation>
    <scope>FUNCTION</scope>
    <scope>INTERACTION WITH RABEPK</scope>
    <scope>MUTAGENESIS OF LYS-1831</scope>
    <scope>REGION</scope>
</reference>
<reference key="9">
    <citation type="journal article" date="2007" name="Proc. Natl. Acad. Sci. U.S.A.">
        <title>Large-scale phosphorylation analysis of mouse liver.</title>
        <authorList>
            <person name="Villen J."/>
            <person name="Beausoleil S.A."/>
            <person name="Gerber S.A."/>
            <person name="Gygi S.P."/>
        </authorList>
    </citation>
    <scope>IDENTIFICATION BY MASS SPECTROMETRY [LARGE SCALE ANALYSIS]</scope>
    <source>
        <tissue>Liver</tissue>
    </source>
</reference>
<reference key="10">
    <citation type="journal article" date="2007" name="Proc. Natl. Acad. Sci. U.S.A.">
        <title>Loss of Vac14, a regulator of the signaling lipid phosphatidylinositol 3,5-bisphosphate, results in neurodegeneration in mice.</title>
        <authorList>
            <person name="Zhang Y."/>
            <person name="Zolov S.N."/>
            <person name="Chow C.Y."/>
            <person name="Slutsky S.G."/>
            <person name="Richardson S.C."/>
            <person name="Piper R.C."/>
            <person name="Yang B."/>
            <person name="Nau J.J."/>
            <person name="Westrick R.J."/>
            <person name="Morrison S.J."/>
            <person name="Meisler M.H."/>
            <person name="Weisman L.S."/>
        </authorList>
    </citation>
    <scope>TISSUE SPECIFICITY</scope>
</reference>
<reference key="11">
    <citation type="journal article" date="2007" name="Cancer Res.">
        <title>The phosphoinositide kinase PIKfyve mediates epidermal growth factor receptor trafficking to the nucleus.</title>
        <authorList>
            <person name="Kim J."/>
            <person name="Jahng W.J."/>
            <person name="Di Vizio D."/>
            <person name="Lee J.S."/>
            <person name="Jhaveri R."/>
            <person name="Rubin M.A."/>
            <person name="Shisheva A."/>
            <person name="Freeman M.R."/>
        </authorList>
    </citation>
    <scope>FUNCTION</scope>
    <scope>MUTAGENESIS OF LYS-1831</scope>
    <scope>INTERACTION WITH EGFR</scope>
</reference>
<reference key="12">
    <citation type="journal article" date="2008" name="EMBO J.">
        <title>VAC14 nucleates a protein complex essential for the acute interconversion of PI3P and PI(3,5)P(2) in yeast and mouse.</title>
        <authorList>
            <person name="Jin N."/>
            <person name="Chow C.Y."/>
            <person name="Liu L."/>
            <person name="Zolov S.N."/>
            <person name="Bronson R."/>
            <person name="Davisson M."/>
            <person name="Petersen J.L."/>
            <person name="Zhang Y."/>
            <person name="Park S."/>
            <person name="Duex J.E."/>
            <person name="Goldowitz D."/>
            <person name="Meisler M.H."/>
            <person name="Weisman L.S."/>
        </authorList>
    </citation>
    <scope>IDENTIFICATION IN THE PI(3,5)P2 REGULATORY COMPLEX</scope>
    <scope>FUNCTION</scope>
    <scope>SUBCELLULAR LOCATION</scope>
</reference>
<reference key="13">
    <citation type="journal article" date="2009" name="J. Biol. Chem.">
        <title>Kinesin adapter JLP links PIKfyve to microtubule-based endosome-to-trans-Golgi network traffic of furin.</title>
        <authorList>
            <person name="Ikonomov O.C."/>
            <person name="Fligger J."/>
            <person name="Sbrissa D."/>
            <person name="Dondapati R."/>
            <person name="Mlak K."/>
            <person name="Deeb R."/>
            <person name="Shisheva A."/>
        </authorList>
    </citation>
    <scope>FUNCTION</scope>
    <scope>INTERACTION WITH SPAG9</scope>
</reference>
<reference key="14">
    <citation type="journal article" date="2010" name="Biochem. Biophys. Res. Commun.">
        <title>Regulation of PIKfyve phosphorylation by insulin and osmotic stress.</title>
        <authorList>
            <person name="Hill E.V."/>
            <person name="Hudson C.A."/>
            <person name="Vertommen D."/>
            <person name="Rider M.H."/>
            <person name="Tavare J.M."/>
        </authorList>
    </citation>
    <scope>PHOSPHORYLATION AT SER-318</scope>
</reference>
<reference key="15">
    <citation type="journal article" date="2010" name="Cell">
        <title>A tissue-specific atlas of mouse protein phosphorylation and expression.</title>
        <authorList>
            <person name="Huttlin E.L."/>
            <person name="Jedrychowski M.P."/>
            <person name="Elias J.E."/>
            <person name="Goswami T."/>
            <person name="Rad R."/>
            <person name="Beausoleil S.A."/>
            <person name="Villen J."/>
            <person name="Haas W."/>
            <person name="Sowa M.E."/>
            <person name="Gygi S.P."/>
        </authorList>
    </citation>
    <scope>PHOSPHORYLATION [LARGE SCALE ANALYSIS] AT SER-299; SER-312; SER-475 AND SER-1753</scope>
    <scope>IDENTIFICATION BY MASS SPECTROMETRY [LARGE SCALE ANALYSIS]</scope>
    <source>
        <tissue>Brain</tissue>
        <tissue>Kidney</tissue>
        <tissue>Liver</tissue>
        <tissue>Lung</tissue>
        <tissue>Pancreas</tissue>
        <tissue>Spleen</tissue>
        <tissue>Testis</tissue>
    </source>
</reference>
<reference key="16">
    <citation type="journal article" date="2011" name="J. Biol. Chem.">
        <title>The phosphoinositide kinase PIKfyve is vital in early embryonic development: preimplantation lethality of PIKfyve-/- embryos but normality of PIKfyve+/- mice.</title>
        <authorList>
            <person name="Ikonomov O.C."/>
            <person name="Sbrissa D."/>
            <person name="Delvecchio K."/>
            <person name="Xie Y."/>
            <person name="Jin J.P."/>
            <person name="Rappolee D."/>
            <person name="Shisheva A."/>
        </authorList>
    </citation>
    <scope>DISRUPTION PHENOTYPE</scope>
    <scope>SUBCELLULAR LOCATION</scope>
    <scope>CATALYTIC ACTIVITY</scope>
</reference>
<reference key="17">
    <citation type="journal article" date="2012" name="Am. J. Physiol.">
        <title>Functional dissociation between PIKfyve-synthesized PtdIns5P and PtdIns(3,5)P2 by means of the PIKfyve inhibitor YM201636.</title>
        <authorList>
            <person name="Sbrissa D."/>
            <person name="Ikonomov O.C."/>
            <person name="Filios C."/>
            <person name="Delvecchio K."/>
            <person name="Shisheva A."/>
        </authorList>
    </citation>
    <scope>FUNCTION</scope>
    <scope>CATALYTIC ACTIVITY</scope>
    <scope>ACTIVITY REGULATION</scope>
</reference>
<reference key="18">
    <citation type="journal article" date="2013" name="Am. J. Physiol.">
        <title>Muscle-specific Pikfyve gene disruption causes glucose intolerance, insulin resistance, adiposity, and hyperinsulinemia but not muscle fiber-type switching.</title>
        <authorList>
            <person name="Ikonomov O.C."/>
            <person name="Sbrissa D."/>
            <person name="Delvecchio K."/>
            <person name="Feng H.Z."/>
            <person name="Cartee G.D."/>
            <person name="Jin J.P."/>
            <person name="Shisheva A."/>
        </authorList>
    </citation>
    <scope>FUNCTION</scope>
    <scope>DISRUPTION PHENOTYPE</scope>
    <scope>CATALYTIC ACTIVITY</scope>
</reference>
<reference key="19">
    <citation type="journal article" date="2014" name="Nat. Commun.">
        <title>Loss of PIKfyve in platelets causes a lysosomal disease leading to inflammation and thrombosis in mice.</title>
        <authorList>
            <person name="Min S.H."/>
            <person name="Suzuki A."/>
            <person name="Stalker T.J."/>
            <person name="Zhao L."/>
            <person name="Wang Y."/>
            <person name="McKennan C."/>
            <person name="Riese M.J."/>
            <person name="Guzman J.F."/>
            <person name="Zhang S."/>
            <person name="Lian L."/>
            <person name="Joshi R."/>
            <person name="Meng R."/>
            <person name="Seeholzer S.H."/>
            <person name="Choi J.K."/>
            <person name="Koretzky G."/>
            <person name="Marks M.S."/>
            <person name="Abrams C.S."/>
        </authorList>
    </citation>
    <scope>FUNCTION</scope>
    <scope>DISRUPTION PHENOTYPE</scope>
</reference>
<reference key="20">
    <citation type="journal article" date="2016" name="Dev. Cell">
        <title>PIKfyve Regulates Vacuole Maturation and Nutrient Recovery following Engulfment.</title>
        <authorList>
            <person name="Krishna S."/>
            <person name="Palm W."/>
            <person name="Lee Y."/>
            <person name="Yang W."/>
            <person name="Bandyopadhyay U."/>
            <person name="Xu H."/>
            <person name="Florey O."/>
            <person name="Thompson C.B."/>
            <person name="Overholtzer M."/>
        </authorList>
    </citation>
    <scope>FUNCTION</scope>
</reference>
<reference key="21">
    <citation type="journal article" date="2017" name="J. Immunol.">
        <title>The Lipid Kinase PIKfyve Coordinates the Neutrophil Immune Response through the Activation of the Rac GTPase.</title>
        <authorList>
            <person name="Dayam R.M."/>
            <person name="Sun C.X."/>
            <person name="Choy C.H."/>
            <person name="Mancuso G."/>
            <person name="Glogauer M."/>
            <person name="Botelho R.J."/>
        </authorList>
    </citation>
    <scope>FUNCTION</scope>
    <scope>ACTIVITY REGULATION</scope>
</reference>
<reference key="22">
    <citation type="journal article" date="2018" name="PLoS Genet.">
        <title>PIKfyve regulates melanosome biogenesis.</title>
        <authorList>
            <person name="Liggins M.C."/>
            <person name="Flesher J.L."/>
            <person name="Jahid S."/>
            <person name="Vasudeva P."/>
            <person name="Eby V."/>
            <person name="Takasuga S."/>
            <person name="Sasaki J."/>
            <person name="Sasaki T."/>
            <person name="Boissy R.E."/>
            <person name="Ganesan A.K."/>
        </authorList>
    </citation>
    <scope>FUNCTION</scope>
    <scope>DISRUPTION PHENOTYPE</scope>
</reference>
<reference key="23">
    <citation type="journal article" date="2019" name="Mol. Cell. Biol.">
        <title>PIKfyve Deficiency in Myeloid Cells Impairs Lysosomal Homeostasis in Macrophages and Promotes Systemic Inflammation in Mice.</title>
        <authorList>
            <person name="Min S.H."/>
            <person name="Suzuki A."/>
            <person name="Weaver L."/>
            <person name="Guzman J."/>
            <person name="Chung Y."/>
            <person name="Jin H."/>
            <person name="Gonzalez F."/>
            <person name="Trasorras C."/>
            <person name="Zhao L."/>
            <person name="Spruce L.A."/>
            <person name="Seeholzer S.H."/>
            <person name="Behrens E.M."/>
            <person name="Abrams C.S."/>
        </authorList>
    </citation>
    <scope>FUNCTION</scope>
    <scope>DISRUPTION PHENOTYPE</scope>
</reference>
<protein>
    <recommendedName>
        <fullName evidence="28">1-phosphatidylinositol 3-phosphate 5-kinase</fullName>
        <shortName>Phosphatidylinositol 3-phosphate 5-kinase</shortName>
        <ecNumber evidence="7">2.7.1.150</ecNumber>
    </recommendedName>
    <alternativeName>
        <fullName>FYVE finger-containing phosphoinositide kinase</fullName>
    </alternativeName>
    <alternativeName>
        <fullName>PIKfyve</fullName>
    </alternativeName>
    <alternativeName>
        <fullName>Phosphatidylinositol 3-phosphate 5-kinase type III</fullName>
        <shortName>PIPkin-III</shortName>
        <shortName>Type III PIP kinase</shortName>
    </alternativeName>
    <alternativeName>
        <fullName evidence="24">Serine-protein kinase PIKFYVE</fullName>
        <ecNumber evidence="8">2.7.11.1</ecNumber>
    </alternativeName>
    <alternativeName>
        <fullName evidence="23">p235</fullName>
    </alternativeName>
</protein>
<keyword id="KW-0007">Acetylation</keyword>
<keyword id="KW-0025">Alternative splicing</keyword>
<keyword id="KW-0067">ATP-binding</keyword>
<keyword id="KW-0968">Cytoplasmic vesicle</keyword>
<keyword id="KW-0967">Endosome</keyword>
<keyword id="KW-0418">Kinase</keyword>
<keyword id="KW-0443">Lipid metabolism</keyword>
<keyword id="KW-0472">Membrane</keyword>
<keyword id="KW-0479">Metal-binding</keyword>
<keyword id="KW-0547">Nucleotide-binding</keyword>
<keyword id="KW-0597">Phosphoprotein</keyword>
<keyword id="KW-1185">Reference proteome</keyword>
<keyword id="KW-0808">Transferase</keyword>
<keyword id="KW-0862">Zinc</keyword>
<keyword id="KW-0863">Zinc-finger</keyword>
<name>FYV1_MOUSE</name>
<sequence>MATDDKSSPTLDSANDLPRSPASPSHLTHFKPLTPDQDEPPFKSAYSSFVNLFRFNKERGEGGQGEQQSPSSSWASPQIPSRTQSVRSPVPYKKQLNEELHRRSSVLDSRRKAEPACGGHDPRTAVQLRSLSTVLKRLKEIMEGKSQDSDLKQYWMPDSQCKECYDCSEKFTTFRRRHHCRLCGQIFCSRCCNQEIPGKFMGYTGDLRACTYCRKIALSYAHSTDSNSIGEDLNALSDSTCSVSILDPSEPRTPVGSRKASRNIFLEDDLAWQSLIHPDSSNSALSTRLVSVQEDAGKSPARNRSASITNLSLDRSGSPMVPSYETSVSPQANRNYIRTETTEDERKILLDSAQLKDLWKKICHHTSGMEFQDHRYWLRTHPNCIVGKELVNWLIRNGHIATRAQAIAIGQAMVDGRWLDCVSHHDQLFRDEYALYRPLQSTEFSETPSPDSDSVNSVEGHSEPSWFKDIKFDDSDTEQIAEEGDDNLANSASPSKRTSVSSFQSTVDSDSAASISLNVELDNVNFHIKKPSKYPHVPPHPADQKEYLVSDTGGQQLSISDAFIKESLFNRRVEEKSKELPFTPLGWHHNNLELLREENEEKQAMERLLSANHNHMMALLQQLLQNESLSSSWRDIIVSLVCQVVQTVRPDVKHQDDDMDIRQFVHIKKIPGGKKFDSVVVNGFVCTKNIAHKKMNSCIKNPKILLLKCSIEYLYREETKFTCIDPIVLQEREFLKNYVQRIVDVRPTLVLVEKTVSRIAQDMLLEHGITLVINVKSQVLERISRMTQGDLVVSMDQLLTKPHLGTCHKFYMQIFQLPNEQTKTLMFFEGCPQHLGCTIKLRGGSDYELARVKEILIFMICVAYHSQLEISFLMDEFAMPPTLMQSPSFHLLTEGRGEEGASQEQVSGSSLPQDPECPREALSSEDSTLLESRTVLEKGELDNKSIPQAVASLKHQDYTTPTCPAGIPCALFALVPESLLPLHMDQQDAVGNEQPETSQQTDEQQDPKSQMKAFRDPLQDDTGMYVTEEVTSSEDQRKTYALTFKQELKDVILCISPVITFREPFLLTEKGMRCSTRDYFPEQIYWSPLLNKEVKEMESRRKKQLLRDLSGLQGMNGSVQAKSIQVLPSHELVSTRIAEHLGDSQTLGRMLADYRARGGRIQSKHLDPFVHSKDASCTSGGKSGNKTESDEERGLIPSDVIWPTKVDCLNPANHQRLCVLFSSSSAQSSNAPSACVSPWIVTMEFYGKNDLTLGIFLERYCFRSSYQCPSMFCDTPMVHHIRRFVHGQGCVQIILKELDSPVPGYQHTILTYSWCRICKQVTPVVALSNESWSMSFAKYLELRFYGHQYTRRANAEPCGHSIHHDYHQYFSYNQMVASFSYSPIRLLEVCVPLPKIFIKRQAPLKVSLLQDLKDFFQKVSQVYLAVDERLASLKTDTFSKTREEKMEDIFAQKEMEEGEFKNWTEKMQARLMSSSVDTPQQLQSIFESLIAKKQSLCEVLQAWNSRLQDLFQQEKGRKRPSVPPSPGRLRQGEESKINAMDTSPRNISPGLHNGEKEDRFLTTLSSQSSTSSTHLQLPTPPEALAEQVVGGPTDLDSASGSEDVFDGHLLGSTDSQVKEKSTMKAIFANLLPGNSYNPIPFPFDPDKHYLMYEHERVPIAVCEKEPSSIIAFALSCKEYRNALEELSKATLRNSAEEGLPANSALDNRPKSSSPIRLPEISGGQTNRTVEAEPQPTKKASGMLSFFRGTAGKSPDLSSQKRETLRGADSAYYQVGQAGKEGLESQGLEPQDEVDGGDTQKKQLTNPHVELQFSDANAKFYCRLYYAGEFHKMREVILGSSEEEFIRSLSHSSPWQARGGKSGAAFYATEDDRFILKQMPRLEVQSFLDFAPHYFNYITNAVQQKRPTALAKILGVYRIGYKNSQNNTEKKLDLLVMENLFYGRKMAQVFDLKGSLRNRNVKTDTGKESCDVVLLDENLLKMVRDNPLYIRSHSKSVLRTSIHSDAHFLSSHLIIDYSLLVGRDDTSNELVVGIIDYIRTFTWDKKLEMVVKSTGILGGQGKMPTVVSPELYRTRFCEAMDKYFLMVPDHWTGLDLNC</sequence>
<proteinExistence type="evidence at protein level"/>
<organism>
    <name type="scientific">Mus musculus</name>
    <name type="common">Mouse</name>
    <dbReference type="NCBI Taxonomy" id="10090"/>
    <lineage>
        <taxon>Eukaryota</taxon>
        <taxon>Metazoa</taxon>
        <taxon>Chordata</taxon>
        <taxon>Craniata</taxon>
        <taxon>Vertebrata</taxon>
        <taxon>Euteleostomi</taxon>
        <taxon>Mammalia</taxon>
        <taxon>Eutheria</taxon>
        <taxon>Euarchontoglires</taxon>
        <taxon>Glires</taxon>
        <taxon>Rodentia</taxon>
        <taxon>Myomorpha</taxon>
        <taxon>Muroidea</taxon>
        <taxon>Muridae</taxon>
        <taxon>Murinae</taxon>
        <taxon>Mus</taxon>
        <taxon>Mus</taxon>
    </lineage>
</organism>
<gene>
    <name evidence="32" type="primary">Pikfyve</name>
    <name evidence="26" type="synonym">Fab1</name>
    <name type="synonym">Kiaa0981</name>
    <name evidence="26" type="synonym">Pip5k3</name>
</gene>
<evidence type="ECO:0000250" key="1">
    <source>
        <dbReference type="UniProtKB" id="Q9Y2I7"/>
    </source>
</evidence>
<evidence type="ECO:0000255" key="2">
    <source>
        <dbReference type="PROSITE-ProRule" id="PRU00066"/>
    </source>
</evidence>
<evidence type="ECO:0000255" key="3">
    <source>
        <dbReference type="PROSITE-ProRule" id="PRU00091"/>
    </source>
</evidence>
<evidence type="ECO:0000255" key="4">
    <source>
        <dbReference type="PROSITE-ProRule" id="PRU00781"/>
    </source>
</evidence>
<evidence type="ECO:0000256" key="5">
    <source>
        <dbReference type="SAM" id="MobiDB-lite"/>
    </source>
</evidence>
<evidence type="ECO:0000269" key="6">
    <source>
    </source>
</evidence>
<evidence type="ECO:0000269" key="7">
    <source>
    </source>
</evidence>
<evidence type="ECO:0000269" key="8">
    <source>
    </source>
</evidence>
<evidence type="ECO:0000269" key="9">
    <source>
    </source>
</evidence>
<evidence type="ECO:0000269" key="10">
    <source>
    </source>
</evidence>
<evidence type="ECO:0000269" key="11">
    <source>
    </source>
</evidence>
<evidence type="ECO:0000269" key="12">
    <source>
    </source>
</evidence>
<evidence type="ECO:0000269" key="13">
    <source>
    </source>
</evidence>
<evidence type="ECO:0000269" key="14">
    <source>
    </source>
</evidence>
<evidence type="ECO:0000269" key="15">
    <source>
    </source>
</evidence>
<evidence type="ECO:0000269" key="16">
    <source>
    </source>
</evidence>
<evidence type="ECO:0000269" key="17">
    <source>
    </source>
</evidence>
<evidence type="ECO:0000269" key="18">
    <source>
    </source>
</evidence>
<evidence type="ECO:0000269" key="19">
    <source>
    </source>
</evidence>
<evidence type="ECO:0000269" key="20">
    <source>
    </source>
</evidence>
<evidence type="ECO:0000269" key="21">
    <source>
    </source>
</evidence>
<evidence type="ECO:0000269" key="22">
    <source>
    </source>
</evidence>
<evidence type="ECO:0000303" key="23">
    <source>
    </source>
</evidence>
<evidence type="ECO:0000303" key="24">
    <source>
    </source>
</evidence>
<evidence type="ECO:0000303" key="25">
    <source>
    </source>
</evidence>
<evidence type="ECO:0000303" key="26">
    <source>
    </source>
</evidence>
<evidence type="ECO:0000303" key="27">
    <source>
    </source>
</evidence>
<evidence type="ECO:0000305" key="28"/>
<evidence type="ECO:0000305" key="29">
    <source>
    </source>
</evidence>
<evidence type="ECO:0000305" key="30">
    <source>
    </source>
</evidence>
<evidence type="ECO:0000305" key="31">
    <source>
    </source>
</evidence>
<evidence type="ECO:0000312" key="32">
    <source>
        <dbReference type="MGI" id="MGI:1335106"/>
    </source>
</evidence>
<evidence type="ECO:0007744" key="33">
    <source>
    </source>
</evidence>
<accession>Q9Z1T6</accession>
<accession>E9QL40</accession>
<accession>Q3TNE4</accession>
<accession>Q3UTT6</accession>
<accession>Q69ZU1</accession>
<accession>Q9CU94</accession>
<comment type="function">
    <text evidence="1 6 7 8 9 10 12 13 16 17 18 19 20 21 22">Dual specificity kinase implicated in myriad essential cellular processes such as maintenance of endomembrane homeostasis, and endocytic-vacuolar pathway, lysosomal trafficking, nuclear transport, stress- or hormone-induced signaling and cell cycle progression (PubMed:17909029, PubMed:19037259, PubMed:22621786). The PI(3,5)P2 regulatory complex regulates both the synthesis and turnover of phosphatidylinositol 3,5-bisphosphate (PtdIns(3,5)P2). Sole enzyme to catalyze the phosphorylation of phosphatidylinositol 3-phosphate on the fifth hydroxyl of the myo-inositol ring, to form (PtdIns(3,5)P2) (PubMed:10419465, PubMed:10567352). Also catalyzes the phosphorylation of phosphatidylinositol on the fifth hydroxyl of the myo-inositol ring, to form phosphatidylinositol 5-phosphate (PtdIns(5)P) (PubMed:10419465, PubMed:22621786). Has serine-protein kinase activity and is able to autophosphorylate and transphosphorylate. Autophosphorylation inhibits its own phosphatidylinositol 3-phosphate 5-kinase activity, stimulates FIG4 lipid phosphatase activity and down-regulates lipid product formation (By similarity) (PubMed:11123925). Involved in key endosome operations such as fission and fusion in the course of endosomal cargo transport (PubMed:22621786). Required for the maturation of early into late endosomes, phagosomes and lysosomes (By similarity). Regulates vacuole maturation and nutrient recovery following engulfment of macromolecules, initiates the redistribution of accumulated lysosomal contents back into the endosome network (PubMed:27623384). Critical regulator of the morphology, degradative activity, and protein turnover of the endolysosomal system in macrophages and platelets (PubMed:25178411, PubMed:31427458). In neutrophils, critical to perform chemotaxis, generate ROS, and undertake phagosome fusion with lysosomes (PubMed:28779020). Plays a key role in the processing and presentation of antigens by major histocompatibility complex class II (MHC class II) mediated by CTSS (By similarity). Regulates melanosome biogenesis by controlling the delivery of proteins from the endosomal compartment to the melanosome (PubMed:29584722). Essential for systemic glucose homeostasis, mediates insulin-induced signals for endosome/actin remodeling in the course of GLUT4 translocation/glucose uptake activation (PubMed:22621786, PubMed:23673157). Supports microtubule-based endosome-to-trans-Golgi network cargo transport, trhough association with SPAG9 and RABEPK (PubMed:14530284, PubMed:19056739). Mediates EGFR trafficking to the nucleus (PubMed:17909029).</text>
</comment>
<comment type="catalytic activity">
    <reaction evidence="6 7 8 15 17">
        <text>a 1,2-diacyl-sn-glycero-3-phospho-(1D-myo-inositol-3-phosphate) + ATP = a 1,2-diacyl-sn-glycero-3-phospho-(1D-myo-inositol-3,5-bisphosphate) + ADP + H(+)</text>
        <dbReference type="Rhea" id="RHEA:13609"/>
        <dbReference type="ChEBI" id="CHEBI:15378"/>
        <dbReference type="ChEBI" id="CHEBI:30616"/>
        <dbReference type="ChEBI" id="CHEBI:57923"/>
        <dbReference type="ChEBI" id="CHEBI:58088"/>
        <dbReference type="ChEBI" id="CHEBI:456216"/>
        <dbReference type="EC" id="2.7.1.150"/>
    </reaction>
    <physiologicalReaction direction="left-to-right" evidence="15 17">
        <dbReference type="Rhea" id="RHEA:13610"/>
    </physiologicalReaction>
</comment>
<comment type="catalytic activity">
    <reaction evidence="6 15 16 17">
        <text>a 1,2-diacyl-sn-glycero-3-phospho-(1D-myo-inositol) + ATP = a 1,2-diacyl-sn-glycero-3-phospho-(1D-myo-inositol-5-phosphate) + ADP + H(+)</text>
        <dbReference type="Rhea" id="RHEA:44680"/>
        <dbReference type="ChEBI" id="CHEBI:15378"/>
        <dbReference type="ChEBI" id="CHEBI:30616"/>
        <dbReference type="ChEBI" id="CHEBI:57795"/>
        <dbReference type="ChEBI" id="CHEBI:57880"/>
        <dbReference type="ChEBI" id="CHEBI:456216"/>
    </reaction>
    <physiologicalReaction direction="left-to-right" evidence="15 17">
        <dbReference type="Rhea" id="RHEA:44681"/>
    </physiologicalReaction>
</comment>
<comment type="catalytic activity">
    <reaction evidence="8">
        <text>L-seryl-[protein] + ATP = O-phospho-L-seryl-[protein] + ADP + H(+)</text>
        <dbReference type="Rhea" id="RHEA:17989"/>
        <dbReference type="Rhea" id="RHEA-COMP:9863"/>
        <dbReference type="Rhea" id="RHEA-COMP:11604"/>
        <dbReference type="ChEBI" id="CHEBI:15378"/>
        <dbReference type="ChEBI" id="CHEBI:29999"/>
        <dbReference type="ChEBI" id="CHEBI:30616"/>
        <dbReference type="ChEBI" id="CHEBI:83421"/>
        <dbReference type="ChEBI" id="CHEBI:456216"/>
        <dbReference type="EC" id="2.7.11.1"/>
    </reaction>
    <physiologicalReaction direction="left-to-right" evidence="29">
        <dbReference type="Rhea" id="RHEA:17990"/>
    </physiologicalReaction>
</comment>
<comment type="cofactor">
    <cofactor evidence="8">
        <name>Mn(2+)</name>
        <dbReference type="ChEBI" id="CHEBI:29035"/>
    </cofactor>
</comment>
<comment type="activity regulation">
    <text evidence="16 20 29">Inhibited by apilimod and YM201636.</text>
</comment>
<comment type="subunit">
    <text evidence="1 9 10 12 13">Component of the PI(3,5)P2 regulatory complex/PAS complex, at least composed of PIKFYVE, FIG4 and VAC14. VAC14 nucleates the assembly of the complex and serves as a scaffold by pentamerizing into a star-shaped structure, which can bind a single copy each of PIKFYVE and FIG4 and coordinates their activities (PubMed:19037259). Interacts (via chaperonin-like domain) with RABEPK; the interaction recruits RABEPK to the endosomal membrane (PubMed:14530284). Interacts with SPAG9 (PubMed:19056739). Interacts with EGFR (PubMed:17909029).</text>
</comment>
<comment type="subcellular location">
    <subcellularLocation>
        <location evidence="30 31">Endosome membrane</location>
        <topology evidence="12">Peripheral membrane protein</topology>
    </subcellularLocation>
    <subcellularLocation>
        <location evidence="1">Early endosome membrane</location>
        <topology evidence="1">Peripheral membrane protein</topology>
    </subcellularLocation>
    <subcellularLocation>
        <location evidence="1">Cytoplasmic vesicle</location>
        <location evidence="1">Phagosome membrane</location>
        <topology evidence="1">Peripheral membrane protein</topology>
    </subcellularLocation>
    <subcellularLocation>
        <location evidence="1">Late endosome membrane</location>
        <topology evidence="28">Peripheral membrane protein</topology>
    </subcellularLocation>
    <text evidence="1">Mainly associated with membranes of the late endocytic pathway.</text>
</comment>
<comment type="alternative products">
    <event type="alternative splicing"/>
    <isoform>
        <id>Q9Z1T6-2</id>
        <name>1</name>
        <name>p235S</name>
        <sequence type="displayed"/>
    </isoform>
    <isoform>
        <id>Q9Z1T6-1</id>
        <name>2</name>
        <name>p235L</name>
        <sequence type="described" ref="VSP_034953 VSP_034954"/>
    </isoform>
    <isoform>
        <id>Q9Z1T6-3</id>
        <name>3</name>
        <sequence type="described" ref="VSP_034955 VSP_034956"/>
    </isoform>
</comment>
<comment type="tissue specificity">
    <text evidence="11">Ubiquitous.</text>
</comment>
<comment type="domain">
    <text evidence="1">Interaction of FYVE-type domain with phosphatidylinositol 3-phosphate (PtdIns(3)P) is necessary for targeting to the membranes of the late endocytic pathway.</text>
</comment>
<comment type="PTM">
    <text evidence="8 14">Phosphorylated in response to insulin at Ser-318 in a protein kinase B (PKB)-dependent manner (PubMed:20513353). Autophosphorylates which down-regulates lipid product formation (PubMed:11123925).</text>
</comment>
<comment type="PTM">
    <text evidence="1 8 14">Autophosphorylates which inhibits its own phosphatidylinositol 3-phosphate 5-kinase activity, stimulates FIG4 lipid phosphatase activity and down-regulates lipid product formation (PubMed:11123925). Dephosphorylated by FIG4 in the PI(3,5)P2 regulatory complex, at Ser-48, Ser-1668 and Ser-2052 (By similarity). Phosphorylated in response to insulin at Ser-318 in a protein kinase B (PKB)-dependent manner (PubMed:20513353).</text>
</comment>
<comment type="disruption phenotype">
    <text evidence="15 17 18 21 22">Knockout embryos die before the 32-64-cell stage (PubMed:21349843). Melanocyte-specific knockout mice exhibit greying of the mouse coat and the accumulation of single membrane vesicle structures in melanocytes resembling multivesicular endosomes (PubMed:29584722). Myeloid cell-specific knockout micedevelop diffuse tissue infiltration of foamy macrophages, hepatosplenomegaly and systemic inflammation (PubMed:31427458). Striated muscle-specific knockout mice exhibit systemic glucose intolerance and insulin resistance at an early age but have unaltered muscle mass. From 10 weeks of age, mice progressively accumulate greater body weight and fat mass (PubMed:23673157). Platelet-specific knockout mice exhibit mild growth delay and body hair loss. Over time, they develop coarse facial features, abdominal distention, an increase in the bulk of their soft tissues and body weight gain. They also have decreased bone mineral density. As mutants aged, they remain infertile and their general body functions deteriorate. The majority die before 28 weeks of age. Animals show massive accelerated arterial thrombosis and organomegaly with inappropriate inflammatory responses characterized by macrophage accumulation in multiple tissues (PubMed:25178411).</text>
</comment>
<comment type="sequence caution" evidence="28">
    <conflict type="frameshift">
        <sequence resource="EMBL-CDS" id="AAD10191"/>
    </conflict>
</comment>
<comment type="sequence caution" evidence="28">
    <conflict type="erroneous initiation">
        <sequence resource="EMBL-CDS" id="BAB30626"/>
    </conflict>
    <text>Truncated N-terminus.</text>
</comment>
<comment type="sequence caution" evidence="28">
    <conflict type="erroneous initiation">
        <sequence resource="EMBL-CDS" id="BAD32355"/>
    </conflict>
    <text>Extended N-terminus.</text>
</comment>
<feature type="initiator methionine" description="Removed" evidence="1">
    <location>
        <position position="1"/>
    </location>
</feature>
<feature type="chain" id="PRO_0000185453" description="1-phosphatidylinositol 3-phosphate 5-kinase">
    <location>
        <begin position="2"/>
        <end position="2097"/>
    </location>
</feature>
<feature type="domain" description="DEP" evidence="2">
    <location>
        <begin position="365"/>
        <end position="440"/>
    </location>
</feature>
<feature type="domain" description="PIPK" evidence="4">
    <location>
        <begin position="1757"/>
        <end position="2083"/>
    </location>
</feature>
<feature type="zinc finger region" description="FYVE-type" evidence="3">
    <location>
        <begin position="158"/>
        <end position="218"/>
    </location>
</feature>
<feature type="region of interest" description="Disordered" evidence="5">
    <location>
        <begin position="1"/>
        <end position="44"/>
    </location>
</feature>
<feature type="region of interest" description="Disordered" evidence="5">
    <location>
        <begin position="56"/>
        <end position="122"/>
    </location>
</feature>
<feature type="region of interest" description="Disordered" evidence="5">
    <location>
        <begin position="442"/>
        <end position="469"/>
    </location>
</feature>
<feature type="region of interest" description="Disordered" evidence="5">
    <location>
        <begin position="484"/>
        <end position="505"/>
    </location>
</feature>
<feature type="region of interest" description="Chaperonin-like domain" evidence="9">
    <location>
        <begin position="616"/>
        <end position="868"/>
    </location>
</feature>
<feature type="region of interest" description="Disordered" evidence="5">
    <location>
        <begin position="895"/>
        <end position="928"/>
    </location>
</feature>
<feature type="region of interest" description="Disordered" evidence="5">
    <location>
        <begin position="989"/>
        <end position="1022"/>
    </location>
</feature>
<feature type="region of interest" description="Disordered" evidence="5">
    <location>
        <begin position="1171"/>
        <end position="1194"/>
    </location>
</feature>
<feature type="region of interest" description="Disordered" evidence="5">
    <location>
        <begin position="1511"/>
        <end position="1555"/>
    </location>
</feature>
<feature type="region of interest" description="Disordered" evidence="5">
    <location>
        <begin position="1697"/>
        <end position="1742"/>
    </location>
</feature>
<feature type="region of interest" description="Disordered" evidence="5">
    <location>
        <begin position="1781"/>
        <end position="1800"/>
    </location>
</feature>
<feature type="region of interest" description="Catalytic" evidence="1">
    <location>
        <begin position="1841"/>
        <end position="2097"/>
    </location>
</feature>
<feature type="compositionally biased region" description="Low complexity" evidence="5">
    <location>
        <begin position="66"/>
        <end position="81"/>
    </location>
</feature>
<feature type="compositionally biased region" description="Polar residues" evidence="5">
    <location>
        <begin position="442"/>
        <end position="459"/>
    </location>
</feature>
<feature type="compositionally biased region" description="Basic and acidic residues" evidence="5">
    <location>
        <begin position="460"/>
        <end position="469"/>
    </location>
</feature>
<feature type="compositionally biased region" description="Polar residues" evidence="5">
    <location>
        <begin position="488"/>
        <end position="505"/>
    </location>
</feature>
<feature type="compositionally biased region" description="Polar residues" evidence="5">
    <location>
        <begin position="902"/>
        <end position="912"/>
    </location>
</feature>
<feature type="compositionally biased region" description="Polar residues" evidence="5">
    <location>
        <begin position="1175"/>
        <end position="1184"/>
    </location>
</feature>
<feature type="compositionally biased region" description="Basic and acidic residues" evidence="5">
    <location>
        <begin position="1185"/>
        <end position="1194"/>
    </location>
</feature>
<feature type="binding site" evidence="3">
    <location>
        <position position="164"/>
    </location>
    <ligand>
        <name>Zn(2+)</name>
        <dbReference type="ChEBI" id="CHEBI:29105"/>
        <label>1</label>
    </ligand>
</feature>
<feature type="binding site" evidence="3">
    <location>
        <position position="167"/>
    </location>
    <ligand>
        <name>Zn(2+)</name>
        <dbReference type="ChEBI" id="CHEBI:29105"/>
        <label>1</label>
    </ligand>
</feature>
<feature type="binding site" evidence="3">
    <location>
        <position position="180"/>
    </location>
    <ligand>
        <name>Zn(2+)</name>
        <dbReference type="ChEBI" id="CHEBI:29105"/>
        <label>2</label>
    </ligand>
</feature>
<feature type="binding site" evidence="3">
    <location>
        <position position="183"/>
    </location>
    <ligand>
        <name>Zn(2+)</name>
        <dbReference type="ChEBI" id="CHEBI:29105"/>
        <label>2</label>
    </ligand>
</feature>
<feature type="binding site" evidence="3">
    <location>
        <position position="188"/>
    </location>
    <ligand>
        <name>Zn(2+)</name>
        <dbReference type="ChEBI" id="CHEBI:29105"/>
        <label>1</label>
    </ligand>
</feature>
<feature type="binding site" evidence="3">
    <location>
        <position position="191"/>
    </location>
    <ligand>
        <name>Zn(2+)</name>
        <dbReference type="ChEBI" id="CHEBI:29105"/>
        <label>1</label>
    </ligand>
</feature>
<feature type="binding site" evidence="3">
    <location>
        <position position="210"/>
    </location>
    <ligand>
        <name>Zn(2+)</name>
        <dbReference type="ChEBI" id="CHEBI:29105"/>
        <label>2</label>
    </ligand>
</feature>
<feature type="binding site" evidence="3">
    <location>
        <position position="213"/>
    </location>
    <ligand>
        <name>Zn(2+)</name>
        <dbReference type="ChEBI" id="CHEBI:29105"/>
        <label>2</label>
    </ligand>
</feature>
<feature type="modified residue" description="N-acetylalanine" evidence="1">
    <location>
        <position position="2"/>
    </location>
</feature>
<feature type="modified residue" description="Phosphoserine; by autocatalysis" evidence="1">
    <location>
        <position position="23"/>
    </location>
</feature>
<feature type="modified residue" description="Phosphoserine; by autocatalysis" evidence="1">
    <location>
        <position position="48"/>
    </location>
</feature>
<feature type="modified residue" description="Phosphoserine" evidence="1">
    <location>
        <position position="88"/>
    </location>
</feature>
<feature type="modified residue" description="Phosphoserine" evidence="33">
    <location>
        <position position="299"/>
    </location>
</feature>
<feature type="modified residue" description="Phosphoserine" evidence="1">
    <location>
        <position position="307"/>
    </location>
</feature>
<feature type="modified residue" description="Phosphoserine" evidence="33">
    <location>
        <position position="312"/>
    </location>
</feature>
<feature type="modified residue" description="Phosphoserine; by PKB/AKT1 or PKB/AKT2" evidence="1">
    <location>
        <position position="318"/>
    </location>
</feature>
<feature type="modified residue" description="Phosphoserine" evidence="1">
    <location>
        <position position="329"/>
    </location>
</feature>
<feature type="modified residue" description="Phosphoserine" evidence="33">
    <location>
        <position position="475"/>
    </location>
</feature>
<feature type="modified residue" description="Phosphoserine" evidence="1">
    <location>
        <position position="1543"/>
    </location>
</feature>
<feature type="modified residue" description="Phosphoserine" evidence="1">
    <location>
        <position position="1548"/>
    </location>
</feature>
<feature type="modified residue" description="Phosphoserine; by autocatalysis" evidence="1">
    <location>
        <position position="1668"/>
    </location>
</feature>
<feature type="modified residue" description="Phosphoserine" evidence="33">
    <location>
        <position position="1753"/>
    </location>
</feature>
<feature type="modified residue" description="Phosphoserine; by autocatalysis" evidence="1">
    <location>
        <position position="1968"/>
    </location>
</feature>
<feature type="modified residue" description="Phosphoserine; by autocatalysis" evidence="1">
    <location>
        <position position="2052"/>
    </location>
</feature>
<feature type="splice variant" id="VSP_034953" description="In isoform 2." evidence="27">
    <original>L</original>
    <variation>LENTLPHPQEST</variation>
    <location>
        <position position="107"/>
    </location>
</feature>
<feature type="splice variant" id="VSP_034954" description="In isoform 2." evidence="27">
    <location>
        <begin position="490"/>
        <end position="545"/>
    </location>
</feature>
<feature type="splice variant" id="VSP_034955" description="In isoform 3." evidence="25">
    <original>NSASPSKR</original>
    <variation>SKFGFLML</variation>
    <location>
        <begin position="490"/>
        <end position="497"/>
    </location>
</feature>
<feature type="splice variant" id="VSP_034956" description="In isoform 3." evidence="25">
    <location>
        <begin position="498"/>
        <end position="2097"/>
    </location>
</feature>
<feature type="mutagenesis site" description="Loss of kinase activity. Decreases RABEPK location to membranes. Abolishes EGFR translocation to the nucleus." evidence="8 9 10">
    <original>K</original>
    <variation>E</variation>
    <location>
        <position position="1831"/>
    </location>
</feature>
<feature type="sequence conflict" description="In Ref. 1; AAD10191." evidence="28" ref="1">
    <original>E</original>
    <variation>K</variation>
    <location>
        <position position="546"/>
    </location>
</feature>
<feature type="sequence conflict" description="In Ref. 2; BAD32355." evidence="28" ref="2">
    <original>K</original>
    <variation>Q</variation>
    <location>
        <position position="944"/>
    </location>
</feature>
<feature type="sequence conflict" description="In Ref. 1; AAD10191." evidence="28" ref="1">
    <original>QP</original>
    <variation>HR</variation>
    <location>
        <begin position="994"/>
        <end position="995"/>
    </location>
</feature>
<feature type="sequence conflict" description="In Ref. 3; BAB30626." evidence="28" ref="3">
    <original>R</original>
    <variation>T</variation>
    <location>
        <position position="1107"/>
    </location>
</feature>
<feature type="sequence conflict" description="In Ref. 1; AAD10191." evidence="28" ref="1">
    <original>L</original>
    <variation>V</variation>
    <location>
        <position position="1141"/>
    </location>
</feature>
<feature type="sequence conflict" description="In Ref. 1; AAD10191." evidence="28" ref="1">
    <original>S</original>
    <variation>Y</variation>
    <location>
        <position position="1264"/>
    </location>
</feature>
<feature type="sequence conflict" description="In Ref. 1; AAD10191." evidence="28" ref="1">
    <original>V</original>
    <variation>E</variation>
    <location>
        <position position="1996"/>
    </location>
</feature>
<dbReference type="EC" id="2.7.1.150" evidence="7"/>
<dbReference type="EC" id="2.7.11.1" evidence="8"/>
<dbReference type="EMBL" id="AF102777">
    <property type="protein sequence ID" value="AAD10191.1"/>
    <property type="status" value="ALT_FRAME"/>
    <property type="molecule type" value="mRNA"/>
</dbReference>
<dbReference type="EMBL" id="AK173077">
    <property type="protein sequence ID" value="BAD32355.1"/>
    <property type="status" value="ALT_INIT"/>
    <property type="molecule type" value="mRNA"/>
</dbReference>
<dbReference type="EMBL" id="AK017186">
    <property type="protein sequence ID" value="BAB30626.3"/>
    <property type="status" value="ALT_INIT"/>
    <property type="molecule type" value="mRNA"/>
</dbReference>
<dbReference type="EMBL" id="AK139116">
    <property type="protein sequence ID" value="BAE23894.1"/>
    <property type="molecule type" value="mRNA"/>
</dbReference>
<dbReference type="EMBL" id="AK165350">
    <property type="protein sequence ID" value="BAE38145.1"/>
    <property type="molecule type" value="mRNA"/>
</dbReference>
<dbReference type="EMBL" id="AC164079">
    <property type="status" value="NOT_ANNOTATED_CDS"/>
    <property type="molecule type" value="Genomic_DNA"/>
</dbReference>
<dbReference type="CCDS" id="CCDS35601.1">
    <molecule id="Q9Z1T6-1"/>
</dbReference>
<dbReference type="CCDS" id="CCDS78600.1">
    <molecule id="Q9Z1T6-2"/>
</dbReference>
<dbReference type="PIR" id="T18290">
    <property type="entry name" value="T18290"/>
</dbReference>
<dbReference type="RefSeq" id="NP_001297553.1">
    <molecule id="Q9Z1T6-2"/>
    <property type="nucleotide sequence ID" value="NM_001310624.1"/>
</dbReference>
<dbReference type="RefSeq" id="NP_035216.2">
    <property type="nucleotide sequence ID" value="NM_011086.2"/>
</dbReference>
<dbReference type="RefSeq" id="XP_006495844.1">
    <molecule id="Q9Z1T6-2"/>
    <property type="nucleotide sequence ID" value="XM_006495781.5"/>
</dbReference>
<dbReference type="SMR" id="Q9Z1T6"/>
<dbReference type="BioGRID" id="202165">
    <property type="interactions" value="7"/>
</dbReference>
<dbReference type="CORUM" id="Q9Z1T6"/>
<dbReference type="FunCoup" id="Q9Z1T6">
    <property type="interactions" value="3693"/>
</dbReference>
<dbReference type="IntAct" id="Q9Z1T6">
    <property type="interactions" value="1"/>
</dbReference>
<dbReference type="STRING" id="10090.ENSMUSP00000095314"/>
<dbReference type="ChEMBL" id="CHEMBL2176842"/>
<dbReference type="GlyGen" id="Q9Z1T6">
    <property type="glycosylation" value="1 site, 1 N-linked glycan (1 site)"/>
</dbReference>
<dbReference type="iPTMnet" id="Q9Z1T6"/>
<dbReference type="PhosphoSitePlus" id="Q9Z1T6"/>
<dbReference type="jPOST" id="Q9Z1T6"/>
<dbReference type="PaxDb" id="10090-ENSMUSP00000095314"/>
<dbReference type="PeptideAtlas" id="Q9Z1T6"/>
<dbReference type="ProteomicsDB" id="273396">
    <molecule id="Q9Z1T6-2"/>
</dbReference>
<dbReference type="ProteomicsDB" id="273397">
    <molecule id="Q9Z1T6-1"/>
</dbReference>
<dbReference type="ProteomicsDB" id="273398">
    <molecule id="Q9Z1T6-3"/>
</dbReference>
<dbReference type="Pumba" id="Q9Z1T6"/>
<dbReference type="Antibodypedia" id="34200">
    <property type="antibodies" value="376 antibodies from 34 providers"/>
</dbReference>
<dbReference type="DNASU" id="18711"/>
<dbReference type="Ensembl" id="ENSMUST00000097707.5">
    <molecule id="Q9Z1T6-2"/>
    <property type="protein sequence ID" value="ENSMUSP00000095314.5"/>
    <property type="gene ID" value="ENSMUSG00000025949.17"/>
</dbReference>
<dbReference type="GeneID" id="18711"/>
<dbReference type="KEGG" id="mmu:18711"/>
<dbReference type="UCSC" id="uc007bho.1">
    <molecule id="Q9Z1T6-3"/>
    <property type="organism name" value="mouse"/>
</dbReference>
<dbReference type="UCSC" id="uc007bht.1">
    <molecule id="Q9Z1T6-2"/>
    <property type="organism name" value="mouse"/>
</dbReference>
<dbReference type="AGR" id="MGI:1335106"/>
<dbReference type="CTD" id="200576"/>
<dbReference type="MGI" id="MGI:1335106">
    <property type="gene designation" value="Pikfyve"/>
</dbReference>
<dbReference type="VEuPathDB" id="HostDB:ENSMUSG00000025949"/>
<dbReference type="eggNOG" id="KOG0230">
    <property type="taxonomic scope" value="Eukaryota"/>
</dbReference>
<dbReference type="GeneTree" id="ENSGT00940000156307"/>
<dbReference type="InParanoid" id="Q9Z1T6"/>
<dbReference type="PhylomeDB" id="Q9Z1T6"/>
<dbReference type="TreeFam" id="TF321717"/>
<dbReference type="BRENDA" id="2.7.1.150">
    <property type="organism ID" value="3474"/>
</dbReference>
<dbReference type="Reactome" id="R-MMU-1660514">
    <property type="pathway name" value="Synthesis of PIPs at the Golgi membrane"/>
</dbReference>
<dbReference type="Reactome" id="R-MMU-1660516">
    <property type="pathway name" value="Synthesis of PIPs at the early endosome membrane"/>
</dbReference>
<dbReference type="Reactome" id="R-MMU-1660517">
    <property type="pathway name" value="Synthesis of PIPs at the late endosome membrane"/>
</dbReference>
<dbReference type="BioGRID-ORCS" id="18711">
    <property type="hits" value="6 hits in 66 CRISPR screens"/>
</dbReference>
<dbReference type="ChiTaRS" id="Pikfyve">
    <property type="organism name" value="mouse"/>
</dbReference>
<dbReference type="PRO" id="PR:Q9Z1T6"/>
<dbReference type="Proteomes" id="UP000000589">
    <property type="component" value="Chromosome 1"/>
</dbReference>
<dbReference type="RNAct" id="Q9Z1T6">
    <property type="molecule type" value="protein"/>
</dbReference>
<dbReference type="Bgee" id="ENSMUSG00000025949">
    <property type="expression patterns" value="Expressed in rostral migratory stream and 231 other cell types or tissues"/>
</dbReference>
<dbReference type="ExpressionAtlas" id="Q9Z1T6">
    <property type="expression patterns" value="baseline and differential"/>
</dbReference>
<dbReference type="GO" id="GO:0005911">
    <property type="term" value="C:cell-cell junction"/>
    <property type="evidence" value="ECO:0000314"/>
    <property type="project" value="MGI"/>
</dbReference>
<dbReference type="GO" id="GO:0031410">
    <property type="term" value="C:cytoplasmic vesicle"/>
    <property type="evidence" value="ECO:0000314"/>
    <property type="project" value="MGI"/>
</dbReference>
<dbReference type="GO" id="GO:0005829">
    <property type="term" value="C:cytosol"/>
    <property type="evidence" value="ECO:0000314"/>
    <property type="project" value="MGI"/>
</dbReference>
<dbReference type="GO" id="GO:0031901">
    <property type="term" value="C:early endosome membrane"/>
    <property type="evidence" value="ECO:0000250"/>
    <property type="project" value="UniProtKB"/>
</dbReference>
<dbReference type="GO" id="GO:0000139">
    <property type="term" value="C:Golgi membrane"/>
    <property type="evidence" value="ECO:0000304"/>
    <property type="project" value="Reactome"/>
</dbReference>
<dbReference type="GO" id="GO:0031902">
    <property type="term" value="C:late endosome membrane"/>
    <property type="evidence" value="ECO:0000304"/>
    <property type="project" value="Reactome"/>
</dbReference>
<dbReference type="GO" id="GO:0048471">
    <property type="term" value="C:perinuclear region of cytoplasm"/>
    <property type="evidence" value="ECO:0000314"/>
    <property type="project" value="MGI"/>
</dbReference>
<dbReference type="GO" id="GO:0030670">
    <property type="term" value="C:phagocytic vesicle membrane"/>
    <property type="evidence" value="ECO:0000250"/>
    <property type="project" value="UniProtKB"/>
</dbReference>
<dbReference type="GO" id="GO:0012506">
    <property type="term" value="C:vesicle membrane"/>
    <property type="evidence" value="ECO:0000314"/>
    <property type="project" value="UniProtKB"/>
</dbReference>
<dbReference type="GO" id="GO:0000285">
    <property type="term" value="F:1-phosphatidylinositol-3-phosphate 5-kinase activity"/>
    <property type="evidence" value="ECO:0000314"/>
    <property type="project" value="UniProtKB"/>
</dbReference>
<dbReference type="GO" id="GO:0016308">
    <property type="term" value="F:1-phosphatidylinositol-4-phosphate 5-kinase activity"/>
    <property type="evidence" value="ECO:0000314"/>
    <property type="project" value="UniProtKB"/>
</dbReference>
<dbReference type="GO" id="GO:0052810">
    <property type="term" value="F:1-phosphatidylinositol-5-kinase activity"/>
    <property type="evidence" value="ECO:0000314"/>
    <property type="project" value="UniProtKB"/>
</dbReference>
<dbReference type="GO" id="GO:0005524">
    <property type="term" value="F:ATP binding"/>
    <property type="evidence" value="ECO:0007669"/>
    <property type="project" value="UniProtKB-KW"/>
</dbReference>
<dbReference type="GO" id="GO:0016301">
    <property type="term" value="F:kinase activity"/>
    <property type="evidence" value="ECO:0000314"/>
    <property type="project" value="UniProtKB"/>
</dbReference>
<dbReference type="GO" id="GO:0106310">
    <property type="term" value="F:protein serine kinase activity"/>
    <property type="evidence" value="ECO:0007669"/>
    <property type="project" value="RHEA"/>
</dbReference>
<dbReference type="GO" id="GO:0004674">
    <property type="term" value="F:protein serine/threonine kinase activity"/>
    <property type="evidence" value="ECO:0000314"/>
    <property type="project" value="UniProtKB"/>
</dbReference>
<dbReference type="GO" id="GO:0008270">
    <property type="term" value="F:zinc ion binding"/>
    <property type="evidence" value="ECO:0000314"/>
    <property type="project" value="UniProtKB"/>
</dbReference>
<dbReference type="GO" id="GO:1903100">
    <property type="term" value="P:1-phosphatidyl-1D-myo-inositol 3,5-bisphosphate metabolic process"/>
    <property type="evidence" value="ECO:0000314"/>
    <property type="project" value="UniProtKB"/>
</dbReference>
<dbReference type="GO" id="GO:0019886">
    <property type="term" value="P:antigen processing and presentation of exogenous peptide antigen via MHC class II"/>
    <property type="evidence" value="ECO:0000250"/>
    <property type="project" value="UniProtKB"/>
</dbReference>
<dbReference type="GO" id="GO:0035556">
    <property type="term" value="P:intracellular signal transduction"/>
    <property type="evidence" value="ECO:0000314"/>
    <property type="project" value="UniProtKB"/>
</dbReference>
<dbReference type="GO" id="GO:0032438">
    <property type="term" value="P:melanosome organization"/>
    <property type="evidence" value="ECO:0000315"/>
    <property type="project" value="UniProtKB"/>
</dbReference>
<dbReference type="GO" id="GO:0032288">
    <property type="term" value="P:myelin assembly"/>
    <property type="evidence" value="ECO:0000316"/>
    <property type="project" value="MGI"/>
</dbReference>
<dbReference type="GO" id="GO:0030593">
    <property type="term" value="P:neutrophil chemotaxis"/>
    <property type="evidence" value="ECO:0000314"/>
    <property type="project" value="UniProtKB"/>
</dbReference>
<dbReference type="GO" id="GO:0036289">
    <property type="term" value="P:peptidyl-serine autophosphorylation"/>
    <property type="evidence" value="ECO:0000314"/>
    <property type="project" value="UniProtKB"/>
</dbReference>
<dbReference type="GO" id="GO:0090382">
    <property type="term" value="P:phagosome maturation"/>
    <property type="evidence" value="ECO:0000314"/>
    <property type="project" value="UniProtKB"/>
</dbReference>
<dbReference type="GO" id="GO:0090385">
    <property type="term" value="P:phagosome-lysosome fusion"/>
    <property type="evidence" value="ECO:0000314"/>
    <property type="project" value="UniProtKB"/>
</dbReference>
<dbReference type="GO" id="GO:1904562">
    <property type="term" value="P:phosphatidylinositol 5-phosphate metabolic process"/>
    <property type="evidence" value="ECO:0000314"/>
    <property type="project" value="UniProtKB"/>
</dbReference>
<dbReference type="GO" id="GO:0006612">
    <property type="term" value="P:protein targeting to membrane"/>
    <property type="evidence" value="ECO:0000314"/>
    <property type="project" value="UniProtKB"/>
</dbReference>
<dbReference type="GO" id="GO:1903426">
    <property type="term" value="P:regulation of reactive oxygen species biosynthetic process"/>
    <property type="evidence" value="ECO:0000314"/>
    <property type="project" value="UniProtKB"/>
</dbReference>
<dbReference type="CDD" id="cd04448">
    <property type="entry name" value="DEP_PIKfyve"/>
    <property type="match status" value="1"/>
</dbReference>
<dbReference type="CDD" id="cd03334">
    <property type="entry name" value="Fab1_TCP"/>
    <property type="match status" value="1"/>
</dbReference>
<dbReference type="CDD" id="cd15725">
    <property type="entry name" value="FYVE_PIKfyve_Fab1"/>
    <property type="match status" value="1"/>
</dbReference>
<dbReference type="CDD" id="cd17300">
    <property type="entry name" value="PIPKc_PIKfyve"/>
    <property type="match status" value="1"/>
</dbReference>
<dbReference type="FunFam" id="3.30.810.10:FF:000001">
    <property type="entry name" value="1-phosphatidylinositol 3-phosphate 5-kinase FAB1"/>
    <property type="match status" value="1"/>
</dbReference>
<dbReference type="FunFam" id="1.10.10.10:FF:000206">
    <property type="entry name" value="1-phosphatidylinositol 3-phosphate 5-kinase isoform X1"/>
    <property type="match status" value="1"/>
</dbReference>
<dbReference type="FunFam" id="3.30.40.10:FF:000057">
    <property type="entry name" value="1-phosphatidylinositol 3-phosphate 5-kinase isoform X1"/>
    <property type="match status" value="1"/>
</dbReference>
<dbReference type="FunFam" id="3.30.800.10:FF:000004">
    <property type="entry name" value="1-phosphatidylinositol 3-phosphate 5-kinase isoform X1"/>
    <property type="match status" value="1"/>
</dbReference>
<dbReference type="FunFam" id="3.50.7.10:FF:000007">
    <property type="entry name" value="1-phosphatidylinositol 3-phosphate 5-kinase isoform X1"/>
    <property type="match status" value="1"/>
</dbReference>
<dbReference type="Gene3D" id="3.30.810.10">
    <property type="entry name" value="2-Layer Sandwich"/>
    <property type="match status" value="1"/>
</dbReference>
<dbReference type="Gene3D" id="3.50.7.10">
    <property type="entry name" value="GroEL"/>
    <property type="match status" value="1"/>
</dbReference>
<dbReference type="Gene3D" id="3.30.800.10">
    <property type="entry name" value="Phosphatidylinositol Phosphate Kinase II Beta"/>
    <property type="match status" value="1"/>
</dbReference>
<dbReference type="Gene3D" id="1.10.10.10">
    <property type="entry name" value="Winged helix-like DNA-binding domain superfamily/Winged helix DNA-binding domain"/>
    <property type="match status" value="1"/>
</dbReference>
<dbReference type="Gene3D" id="3.30.40.10">
    <property type="entry name" value="Zinc/RING finger domain, C3HC4 (zinc finger)"/>
    <property type="match status" value="1"/>
</dbReference>
<dbReference type="InterPro" id="IPR002423">
    <property type="entry name" value="Cpn60/GroEL/TCP-1"/>
</dbReference>
<dbReference type="InterPro" id="IPR000591">
    <property type="entry name" value="DEP_dom"/>
</dbReference>
<dbReference type="InterPro" id="IPR027409">
    <property type="entry name" value="GroEL-like_apical_dom_sf"/>
</dbReference>
<dbReference type="InterPro" id="IPR043548">
    <property type="entry name" value="PIKfyve"/>
</dbReference>
<dbReference type="InterPro" id="IPR037378">
    <property type="entry name" value="PIKfyve_DEP"/>
</dbReference>
<dbReference type="InterPro" id="IPR044769">
    <property type="entry name" value="PIKfyve_PIPKc"/>
</dbReference>
<dbReference type="InterPro" id="IPR027483">
    <property type="entry name" value="PInositol-4-P-4/5-kinase_C_sf"/>
</dbReference>
<dbReference type="InterPro" id="IPR002498">
    <property type="entry name" value="PInositol-4-P-4/5-kinase_core"/>
</dbReference>
<dbReference type="InterPro" id="IPR027484">
    <property type="entry name" value="PInositol-4-P-5-kinase_N"/>
</dbReference>
<dbReference type="InterPro" id="IPR027410">
    <property type="entry name" value="TCP-1-like_intermed_sf"/>
</dbReference>
<dbReference type="InterPro" id="IPR036388">
    <property type="entry name" value="WH-like_DNA-bd_sf"/>
</dbReference>
<dbReference type="InterPro" id="IPR036390">
    <property type="entry name" value="WH_DNA-bd_sf"/>
</dbReference>
<dbReference type="InterPro" id="IPR000306">
    <property type="entry name" value="Znf_FYVE"/>
</dbReference>
<dbReference type="InterPro" id="IPR017455">
    <property type="entry name" value="Znf_FYVE-rel"/>
</dbReference>
<dbReference type="InterPro" id="IPR011011">
    <property type="entry name" value="Znf_FYVE_PHD"/>
</dbReference>
<dbReference type="InterPro" id="IPR013083">
    <property type="entry name" value="Znf_RING/FYVE/PHD"/>
</dbReference>
<dbReference type="PANTHER" id="PTHR46715">
    <property type="entry name" value="1-PHOSPHATIDYLINOSITOL 3-PHOSPHATE 5-KINASE"/>
    <property type="match status" value="1"/>
</dbReference>
<dbReference type="PANTHER" id="PTHR46715:SF1">
    <property type="entry name" value="1-PHOSPHATIDYLINOSITOL 3-PHOSPHATE 5-KINASE"/>
    <property type="match status" value="1"/>
</dbReference>
<dbReference type="Pfam" id="PF00118">
    <property type="entry name" value="Cpn60_TCP1"/>
    <property type="match status" value="1"/>
</dbReference>
<dbReference type="Pfam" id="PF00610">
    <property type="entry name" value="DEP"/>
    <property type="match status" value="1"/>
</dbReference>
<dbReference type="Pfam" id="PF01363">
    <property type="entry name" value="FYVE"/>
    <property type="match status" value="1"/>
</dbReference>
<dbReference type="Pfam" id="PF01504">
    <property type="entry name" value="PIP5K"/>
    <property type="match status" value="2"/>
</dbReference>
<dbReference type="SMART" id="SM00049">
    <property type="entry name" value="DEP"/>
    <property type="match status" value="1"/>
</dbReference>
<dbReference type="SMART" id="SM00064">
    <property type="entry name" value="FYVE"/>
    <property type="match status" value="1"/>
</dbReference>
<dbReference type="SMART" id="SM00330">
    <property type="entry name" value="PIPKc"/>
    <property type="match status" value="1"/>
</dbReference>
<dbReference type="SUPFAM" id="SSF57903">
    <property type="entry name" value="FYVE/PHD zinc finger"/>
    <property type="match status" value="1"/>
</dbReference>
<dbReference type="SUPFAM" id="SSF52029">
    <property type="entry name" value="GroEL apical domain-like"/>
    <property type="match status" value="1"/>
</dbReference>
<dbReference type="SUPFAM" id="SSF54849">
    <property type="entry name" value="GroEL-intermediate domain like"/>
    <property type="match status" value="1"/>
</dbReference>
<dbReference type="SUPFAM" id="SSF56104">
    <property type="entry name" value="SAICAR synthase-like"/>
    <property type="match status" value="1"/>
</dbReference>
<dbReference type="SUPFAM" id="SSF46785">
    <property type="entry name" value="Winged helix' DNA-binding domain"/>
    <property type="match status" value="1"/>
</dbReference>
<dbReference type="PROSITE" id="PS50186">
    <property type="entry name" value="DEP"/>
    <property type="match status" value="1"/>
</dbReference>
<dbReference type="PROSITE" id="PS51455">
    <property type="entry name" value="PIPK"/>
    <property type="match status" value="1"/>
</dbReference>
<dbReference type="PROSITE" id="PS50178">
    <property type="entry name" value="ZF_FYVE"/>
    <property type="match status" value="1"/>
</dbReference>